<gene>
    <name type="ordered locus">SAS0319</name>
</gene>
<comment type="subcellular location">
    <subcellularLocation>
        <location evidence="1">Cell membrane</location>
        <topology evidence="1">Lipid-anchor</topology>
    </subcellularLocation>
</comment>
<comment type="similarity">
    <text evidence="2">Belongs to the EfeM/EfeO family.</text>
</comment>
<accession>Q6GCC9</accession>
<sequence length="284" mass="32261">MKKLTTLLLASTLLIAACGNDDSKKDDSKTSKKDDGVKAELKQATKAYDKYTDEQLNEFLKGTEKFVKAIENNDMAQAKALYPKVRMYYERSEPVAEAFGDLDPKIDARLADMKEEKKEKEWSGYHKIEKALYEDKKIDDVTKKDAQQLLKDAKELHAKADTLDITPKLMLQGSVDLLNEVATSKITGEEEIYSHTDLYDFKANIEGAQKIYDLFKPILEKKDKKLSDDIQMNFDKVNQLLDKYKDNNGGYESFEKVSKKDRKAFADAVNALGEPLSKMAVITE</sequence>
<reference key="1">
    <citation type="journal article" date="2004" name="Proc. Natl. Acad. Sci. U.S.A.">
        <title>Complete genomes of two clinical Staphylococcus aureus strains: evidence for the rapid evolution of virulence and drug resistance.</title>
        <authorList>
            <person name="Holden M.T.G."/>
            <person name="Feil E.J."/>
            <person name="Lindsay J.A."/>
            <person name="Peacock S.J."/>
            <person name="Day N.P.J."/>
            <person name="Enright M.C."/>
            <person name="Foster T.J."/>
            <person name="Moore C.E."/>
            <person name="Hurst L."/>
            <person name="Atkin R."/>
            <person name="Barron A."/>
            <person name="Bason N."/>
            <person name="Bentley S.D."/>
            <person name="Chillingworth C."/>
            <person name="Chillingworth T."/>
            <person name="Churcher C."/>
            <person name="Clark L."/>
            <person name="Corton C."/>
            <person name="Cronin A."/>
            <person name="Doggett J."/>
            <person name="Dowd L."/>
            <person name="Feltwell T."/>
            <person name="Hance Z."/>
            <person name="Harris B."/>
            <person name="Hauser H."/>
            <person name="Holroyd S."/>
            <person name="Jagels K."/>
            <person name="James K.D."/>
            <person name="Lennard N."/>
            <person name="Line A."/>
            <person name="Mayes R."/>
            <person name="Moule S."/>
            <person name="Mungall K."/>
            <person name="Ormond D."/>
            <person name="Quail M.A."/>
            <person name="Rabbinowitsch E."/>
            <person name="Rutherford K.M."/>
            <person name="Sanders M."/>
            <person name="Sharp S."/>
            <person name="Simmonds M."/>
            <person name="Stevens K."/>
            <person name="Whitehead S."/>
            <person name="Barrell B.G."/>
            <person name="Spratt B.G."/>
            <person name="Parkhill J."/>
        </authorList>
    </citation>
    <scope>NUCLEOTIDE SEQUENCE [LARGE SCALE GENOMIC DNA]</scope>
    <source>
        <strain>MSSA476</strain>
    </source>
</reference>
<name>EFEMO_STAAS</name>
<evidence type="ECO:0000255" key="1">
    <source>
        <dbReference type="PROSITE-ProRule" id="PRU00303"/>
    </source>
</evidence>
<evidence type="ECO:0000305" key="2"/>
<proteinExistence type="inferred from homology"/>
<dbReference type="EMBL" id="BX571857">
    <property type="protein sequence ID" value="CAG42090.1"/>
    <property type="molecule type" value="Genomic_DNA"/>
</dbReference>
<dbReference type="SMR" id="Q6GCC9"/>
<dbReference type="KEGG" id="sas:SAS0319"/>
<dbReference type="HOGENOM" id="CLU_050342_0_1_9"/>
<dbReference type="GO" id="GO:0005886">
    <property type="term" value="C:plasma membrane"/>
    <property type="evidence" value="ECO:0007669"/>
    <property type="project" value="UniProtKB-SubCell"/>
</dbReference>
<dbReference type="CDD" id="cd14656">
    <property type="entry name" value="Imelysin-like_EfeO"/>
    <property type="match status" value="1"/>
</dbReference>
<dbReference type="Gene3D" id="1.20.1420.20">
    <property type="entry name" value="M75 peptidase, HXXE motif"/>
    <property type="match status" value="1"/>
</dbReference>
<dbReference type="InterPro" id="IPR050894">
    <property type="entry name" value="EfeM/EfeO_iron_uptake"/>
</dbReference>
<dbReference type="InterPro" id="IPR018976">
    <property type="entry name" value="Imelysin-like"/>
</dbReference>
<dbReference type="InterPro" id="IPR034981">
    <property type="entry name" value="Imelysin-like_EfeO/Algp7"/>
</dbReference>
<dbReference type="InterPro" id="IPR038352">
    <property type="entry name" value="Imelysin_sf"/>
</dbReference>
<dbReference type="InterPro" id="IPR053377">
    <property type="entry name" value="Iron_uptake_EfeM/EfeO"/>
</dbReference>
<dbReference type="NCBIfam" id="NF041757">
    <property type="entry name" value="EfeO"/>
    <property type="match status" value="1"/>
</dbReference>
<dbReference type="PANTHER" id="PTHR39192">
    <property type="entry name" value="IRON UPTAKE SYSTEM COMPONENT EFEO"/>
    <property type="match status" value="1"/>
</dbReference>
<dbReference type="PANTHER" id="PTHR39192:SF1">
    <property type="entry name" value="IRON UPTAKE SYSTEM COMPONENT EFEO"/>
    <property type="match status" value="1"/>
</dbReference>
<dbReference type="Pfam" id="PF09375">
    <property type="entry name" value="Peptidase_M75"/>
    <property type="match status" value="1"/>
</dbReference>
<dbReference type="PROSITE" id="PS51257">
    <property type="entry name" value="PROKAR_LIPOPROTEIN"/>
    <property type="match status" value="1"/>
</dbReference>
<organism>
    <name type="scientific">Staphylococcus aureus (strain MSSA476)</name>
    <dbReference type="NCBI Taxonomy" id="282459"/>
    <lineage>
        <taxon>Bacteria</taxon>
        <taxon>Bacillati</taxon>
        <taxon>Bacillota</taxon>
        <taxon>Bacilli</taxon>
        <taxon>Bacillales</taxon>
        <taxon>Staphylococcaceae</taxon>
        <taxon>Staphylococcus</taxon>
    </lineage>
</organism>
<feature type="signal peptide" evidence="1">
    <location>
        <begin position="1"/>
        <end position="17"/>
    </location>
</feature>
<feature type="chain" id="PRO_0000278312" description="Efem/EfeO family lipoprotein">
    <location>
        <begin position="18"/>
        <end position="284"/>
    </location>
</feature>
<feature type="lipid moiety-binding region" description="N-palmitoyl cysteine" evidence="1">
    <location>
        <position position="18"/>
    </location>
</feature>
<feature type="lipid moiety-binding region" description="S-diacylglycerol cysteine" evidence="1">
    <location>
        <position position="18"/>
    </location>
</feature>
<keyword id="KW-1003">Cell membrane</keyword>
<keyword id="KW-0449">Lipoprotein</keyword>
<keyword id="KW-0472">Membrane</keyword>
<keyword id="KW-0564">Palmitate</keyword>
<keyword id="KW-0732">Signal</keyword>
<protein>
    <recommendedName>
        <fullName>Efem/EfeO family lipoprotein</fullName>
    </recommendedName>
</protein>